<feature type="signal peptide" evidence="2">
    <location>
        <begin position="1"/>
        <end position="25"/>
    </location>
</feature>
<feature type="chain" id="PRO_0000315046" description="Collectin-11">
    <location>
        <begin position="26"/>
        <end position="271"/>
    </location>
</feature>
<feature type="domain" description="Collagen-like">
    <location>
        <begin position="44"/>
        <end position="103"/>
    </location>
</feature>
<feature type="domain" description="C-type lectin" evidence="3">
    <location>
        <begin position="149"/>
        <end position="265"/>
    </location>
</feature>
<feature type="region of interest" description="Disordered" evidence="4">
    <location>
        <begin position="46"/>
        <end position="112"/>
    </location>
</feature>
<feature type="coiled-coil region" evidence="2">
    <location>
        <begin position="124"/>
        <end position="148"/>
    </location>
</feature>
<feature type="binding site" evidence="1">
    <location>
        <position position="200"/>
    </location>
    <ligand>
        <name>a carbohydrate</name>
        <dbReference type="ChEBI" id="CHEBI:16646"/>
    </ligand>
</feature>
<feature type="binding site" evidence="1">
    <location>
        <position position="207"/>
    </location>
    <ligand>
        <name>Ca(2+)</name>
        <dbReference type="ChEBI" id="CHEBI:29108"/>
        <label>1</label>
    </ligand>
</feature>
<feature type="binding site" evidence="1">
    <location>
        <position position="211"/>
    </location>
    <ligand>
        <name>Ca(2+)</name>
        <dbReference type="ChEBI" id="CHEBI:29108"/>
        <label>1</label>
    </ligand>
</feature>
<feature type="binding site" evidence="1">
    <location>
        <position position="211"/>
    </location>
    <ligand>
        <name>Ca(2+)</name>
        <dbReference type="ChEBI" id="CHEBI:29108"/>
        <label>3</label>
    </ligand>
</feature>
<feature type="binding site" evidence="1">
    <location>
        <position position="232"/>
    </location>
    <ligand>
        <name>Ca(2+)</name>
        <dbReference type="ChEBI" id="CHEBI:29108"/>
        <label>2</label>
    </ligand>
</feature>
<feature type="binding site" evidence="1">
    <location>
        <position position="234"/>
    </location>
    <ligand>
        <name>Ca(2+)</name>
        <dbReference type="ChEBI" id="CHEBI:29108"/>
        <label>2</label>
    </ligand>
</feature>
<feature type="binding site" evidence="1">
    <location>
        <position position="235"/>
    </location>
    <ligand>
        <name>Ca(2+)</name>
        <dbReference type="ChEBI" id="CHEBI:29108"/>
        <label>1</label>
    </ligand>
</feature>
<feature type="binding site" evidence="1">
    <location>
        <position position="238"/>
    </location>
    <ligand>
        <name>Ca(2+)</name>
        <dbReference type="ChEBI" id="CHEBI:29108"/>
        <label>3</label>
    </ligand>
</feature>
<feature type="binding site" evidence="1">
    <location>
        <position position="240"/>
    </location>
    <ligand>
        <name>a carbohydrate</name>
        <dbReference type="ChEBI" id="CHEBI:16646"/>
    </ligand>
</feature>
<feature type="binding site" evidence="1">
    <location>
        <position position="240"/>
    </location>
    <ligand>
        <name>Ca(2+)</name>
        <dbReference type="ChEBI" id="CHEBI:29108"/>
        <label>1</label>
    </ligand>
</feature>
<feature type="binding site" evidence="1">
    <location>
        <position position="240"/>
    </location>
    <ligand>
        <name>Ca(2+)</name>
        <dbReference type="ChEBI" id="CHEBI:29108"/>
        <label>2</label>
    </ligand>
</feature>
<feature type="binding site" evidence="1">
    <location>
        <position position="241"/>
    </location>
    <ligand>
        <name>Ca(2+)</name>
        <dbReference type="ChEBI" id="CHEBI:29108"/>
        <label>1</label>
    </ligand>
</feature>
<feature type="binding site" evidence="1">
    <location>
        <position position="241"/>
    </location>
    <ligand>
        <name>Ca(2+)</name>
        <dbReference type="ChEBI" id="CHEBI:29108"/>
        <label>3</label>
    </ligand>
</feature>
<feature type="binding site" evidence="1">
    <location>
        <position position="244"/>
    </location>
    <ligand>
        <name>a carbohydrate</name>
        <dbReference type="ChEBI" id="CHEBI:16646"/>
    </ligand>
</feature>
<feature type="binding site" evidence="1">
    <location>
        <begin position="252"/>
        <end position="254"/>
    </location>
    <ligand>
        <name>a carbohydrate</name>
        <dbReference type="ChEBI" id="CHEBI:16646"/>
    </ligand>
</feature>
<feature type="binding site" evidence="1">
    <location>
        <position position="253"/>
    </location>
    <ligand>
        <name>Ca(2+)</name>
        <dbReference type="ChEBI" id="CHEBI:29108"/>
        <label>2</label>
    </ligand>
</feature>
<feature type="disulfide bond" evidence="1 3">
    <location>
        <begin position="170"/>
        <end position="264"/>
    </location>
</feature>
<feature type="disulfide bond" evidence="1 3">
    <location>
        <begin position="242"/>
        <end position="256"/>
    </location>
</feature>
<name>COL11_DANRE</name>
<protein>
    <recommendedName>
        <fullName>Collectin-11</fullName>
    </recommendedName>
</protein>
<sequence>MVGEKLVAYMLVSVLGLALLRSVFGQHMPEEPCSVQILVPGLKGEAGEKGEKGAPGRPGRVGPTGEQGPPGDKGQKGSPGRYGKMGPTGPKGLKGDMGDPGPKGPNGEPGVPCECAPLRKMIGEMDIQVVQLTNELKFIKNAVAGIKETDSKVYLLVKEEKRYREAEVFCQGRGGHLAMPKDAAANRAIAGYVTDAGLSRVYIGINDLEREGHFVYVERSPMTTFSRWREGEPNNAYDDEDCVEMVSSGEWIDVACQLTMYFVCEFDKDTV</sequence>
<organism>
    <name type="scientific">Danio rerio</name>
    <name type="common">Zebrafish</name>
    <name type="synonym">Brachydanio rerio</name>
    <dbReference type="NCBI Taxonomy" id="7955"/>
    <lineage>
        <taxon>Eukaryota</taxon>
        <taxon>Metazoa</taxon>
        <taxon>Chordata</taxon>
        <taxon>Craniata</taxon>
        <taxon>Vertebrata</taxon>
        <taxon>Euteleostomi</taxon>
        <taxon>Actinopterygii</taxon>
        <taxon>Neopterygii</taxon>
        <taxon>Teleostei</taxon>
        <taxon>Ostariophysi</taxon>
        <taxon>Cypriniformes</taxon>
        <taxon>Danionidae</taxon>
        <taxon>Danioninae</taxon>
        <taxon>Danio</taxon>
    </lineage>
</organism>
<dbReference type="EMBL" id="BC085557">
    <property type="protein sequence ID" value="AAH85557.1"/>
    <property type="molecule type" value="mRNA"/>
</dbReference>
<dbReference type="RefSeq" id="NP_001007332.1">
    <property type="nucleotide sequence ID" value="NM_001007331.1"/>
</dbReference>
<dbReference type="SMR" id="Q5U3G1"/>
<dbReference type="FunCoup" id="Q5U3G1">
    <property type="interactions" value="1468"/>
</dbReference>
<dbReference type="STRING" id="7955.ENSDARP00000016314"/>
<dbReference type="PaxDb" id="7955-ENSDARP00000016314"/>
<dbReference type="GeneID" id="492459"/>
<dbReference type="KEGG" id="dre:492459"/>
<dbReference type="AGR" id="ZFIN:ZDB-GENE-041114-11"/>
<dbReference type="CTD" id="78989"/>
<dbReference type="ZFIN" id="ZDB-GENE-041114-11">
    <property type="gene designation" value="colec11"/>
</dbReference>
<dbReference type="eggNOG" id="KOG4297">
    <property type="taxonomic scope" value="Eukaryota"/>
</dbReference>
<dbReference type="InParanoid" id="Q5U3G1"/>
<dbReference type="OrthoDB" id="8066719at2759"/>
<dbReference type="PhylomeDB" id="Q5U3G1"/>
<dbReference type="PRO" id="PR:Q5U3G1"/>
<dbReference type="Proteomes" id="UP000000437">
    <property type="component" value="Chromosome 17"/>
</dbReference>
<dbReference type="GO" id="GO:0005581">
    <property type="term" value="C:collagen trimer"/>
    <property type="evidence" value="ECO:0007669"/>
    <property type="project" value="UniProtKB-KW"/>
</dbReference>
<dbReference type="GO" id="GO:0005615">
    <property type="term" value="C:extracellular space"/>
    <property type="evidence" value="ECO:0000250"/>
    <property type="project" value="UniProtKB"/>
</dbReference>
<dbReference type="GO" id="GO:0005509">
    <property type="term" value="F:calcium ion binding"/>
    <property type="evidence" value="ECO:0000250"/>
    <property type="project" value="UniProtKB"/>
</dbReference>
<dbReference type="GO" id="GO:0120153">
    <property type="term" value="F:calcium-dependent carbohydrate binding"/>
    <property type="evidence" value="ECO:0000250"/>
    <property type="project" value="UniProtKB"/>
</dbReference>
<dbReference type="GO" id="GO:0005537">
    <property type="term" value="F:D-mannose binding"/>
    <property type="evidence" value="ECO:0000250"/>
    <property type="project" value="UniProtKB"/>
</dbReference>
<dbReference type="GO" id="GO:0003677">
    <property type="term" value="F:DNA binding"/>
    <property type="evidence" value="ECO:0000250"/>
    <property type="project" value="UniProtKB"/>
</dbReference>
<dbReference type="GO" id="GO:0042806">
    <property type="term" value="F:fucose binding"/>
    <property type="evidence" value="ECO:0000250"/>
    <property type="project" value="UniProtKB"/>
</dbReference>
<dbReference type="GO" id="GO:0070492">
    <property type="term" value="F:oligosaccharide binding"/>
    <property type="evidence" value="ECO:0000250"/>
    <property type="project" value="UniProtKB"/>
</dbReference>
<dbReference type="GO" id="GO:0019730">
    <property type="term" value="P:antimicrobial humoral response"/>
    <property type="evidence" value="ECO:0000250"/>
    <property type="project" value="UniProtKB"/>
</dbReference>
<dbReference type="GO" id="GO:0001867">
    <property type="term" value="P:complement activation, lectin pathway"/>
    <property type="evidence" value="ECO:0000250"/>
    <property type="project" value="UniProtKB"/>
</dbReference>
<dbReference type="GO" id="GO:0032502">
    <property type="term" value="P:developmental process"/>
    <property type="evidence" value="ECO:0000314"/>
    <property type="project" value="UniProtKB"/>
</dbReference>
<dbReference type="GO" id="GO:0001755">
    <property type="term" value="P:neural crest cell migration"/>
    <property type="evidence" value="ECO:0000315"/>
    <property type="project" value="ZFIN"/>
</dbReference>
<dbReference type="CDD" id="cd03591">
    <property type="entry name" value="CLECT_collectin_like"/>
    <property type="match status" value="1"/>
</dbReference>
<dbReference type="FunFam" id="3.10.100.10:FF:000005">
    <property type="entry name" value="collectin-11 isoform X1"/>
    <property type="match status" value="1"/>
</dbReference>
<dbReference type="Gene3D" id="3.10.100.10">
    <property type="entry name" value="Mannose-Binding Protein A, subunit A"/>
    <property type="match status" value="1"/>
</dbReference>
<dbReference type="InterPro" id="IPR001304">
    <property type="entry name" value="C-type_lectin-like"/>
</dbReference>
<dbReference type="InterPro" id="IPR016186">
    <property type="entry name" value="C-type_lectin-like/link_sf"/>
</dbReference>
<dbReference type="InterPro" id="IPR018378">
    <property type="entry name" value="C-type_lectin_CS"/>
</dbReference>
<dbReference type="InterPro" id="IPR051077">
    <property type="entry name" value="Ca-dependent_lectin"/>
</dbReference>
<dbReference type="InterPro" id="IPR008160">
    <property type="entry name" value="Collagen"/>
</dbReference>
<dbReference type="InterPro" id="IPR033990">
    <property type="entry name" value="Collectin_CTLD"/>
</dbReference>
<dbReference type="InterPro" id="IPR016187">
    <property type="entry name" value="CTDL_fold"/>
</dbReference>
<dbReference type="PANTHER" id="PTHR24024:SF14">
    <property type="entry name" value="COLLECTIN-11"/>
    <property type="match status" value="1"/>
</dbReference>
<dbReference type="PANTHER" id="PTHR24024">
    <property type="entry name" value="PULMONARY SURFACTANT-ASSOCIATED PROTEIN A"/>
    <property type="match status" value="1"/>
</dbReference>
<dbReference type="Pfam" id="PF01391">
    <property type="entry name" value="Collagen"/>
    <property type="match status" value="2"/>
</dbReference>
<dbReference type="Pfam" id="PF00059">
    <property type="entry name" value="Lectin_C"/>
    <property type="match status" value="1"/>
</dbReference>
<dbReference type="SMART" id="SM00034">
    <property type="entry name" value="CLECT"/>
    <property type="match status" value="1"/>
</dbReference>
<dbReference type="SUPFAM" id="SSF56436">
    <property type="entry name" value="C-type lectin-like"/>
    <property type="match status" value="1"/>
</dbReference>
<dbReference type="PROSITE" id="PS00615">
    <property type="entry name" value="C_TYPE_LECTIN_1"/>
    <property type="match status" value="1"/>
</dbReference>
<dbReference type="PROSITE" id="PS50041">
    <property type="entry name" value="C_TYPE_LECTIN_2"/>
    <property type="match status" value="1"/>
</dbReference>
<gene>
    <name type="primary">colec11</name>
    <name type="ORF">zgc:103572</name>
</gene>
<reference key="1">
    <citation type="submission" date="2004-11" db="EMBL/GenBank/DDBJ databases">
        <authorList>
            <consortium name="NIH - Zebrafish Gene Collection (ZGC) project"/>
        </authorList>
    </citation>
    <scope>NUCLEOTIDE SEQUENCE [LARGE SCALE MRNA]</scope>
    <source>
        <tissue>Liver</tissue>
    </source>
</reference>
<reference key="2">
    <citation type="journal article" date="2011" name="Nat. Genet.">
        <title>Mutations in lectin complement pathway genes COLEC11 and MASP1 cause 3MC syndrome.</title>
        <authorList>
            <person name="Rooryck C."/>
            <person name="Diaz-Font A."/>
            <person name="Osborn D.P."/>
            <person name="Chabchoub E."/>
            <person name="Hernandez-Hernandez V."/>
            <person name="Shamseldin H."/>
            <person name="Kenny J."/>
            <person name="Waters A."/>
            <person name="Jenkins D."/>
            <person name="Kaissi A.A."/>
            <person name="Leal G.F."/>
            <person name="Dallapiccola B."/>
            <person name="Carnevale F."/>
            <person name="Bitner-Glindzicz M."/>
            <person name="Lees M."/>
            <person name="Hennekam R."/>
            <person name="Stanier P."/>
            <person name="Burns A.J."/>
            <person name="Peeters H."/>
            <person name="Alkuraya F.S."/>
            <person name="Beales P.L."/>
        </authorList>
    </citation>
    <scope>FUNCTION</scope>
</reference>
<accession>Q5U3G1</accession>
<comment type="function">
    <text evidence="1 5">Lectin that plays a role in innate immunity, apoptosis and embryogenesis. Calcium-dependent lectin that binds self and non-self glycoproteins presenting high mannose oligosaccharides with at least one terminal alpha-1,2-linked mannose epitope. Primarily recognizes the terminal disaccharide of the glycan. Also recognizes a subset of fucosylated glycans and lipopolysaccharides. Plays a role in innate immunity through its ability to bind non-self sugars presented by microorganisms and to activate the complement through the recruitment of MAPS1. Also plays a role in apoptosis through its ability to bind in a calcium-independent manner the DNA present at the surface of apoptotic cells and to activate the complement in response to this binding (By similarity). Finally, plays a role in development, probably serving as a guidance cue during the migration of neural crest cells and other cell types during embryogenesis (PubMed:21258343).</text>
</comment>
<comment type="subunit">
    <text evidence="1">Homotrimer; disulfide-linked. Interacts with MASP1; probably triggers the lectin pathway of complement.</text>
</comment>
<comment type="subcellular location">
    <subcellularLocation>
        <location evidence="1">Secreted</location>
    </subcellularLocation>
</comment>
<comment type="similarity">
    <text evidence="6">Belongs to the COLEC10/COLEC11 family.</text>
</comment>
<proteinExistence type="evidence at transcript level"/>
<keyword id="KW-0106">Calcium</keyword>
<keyword id="KW-0175">Coiled coil</keyword>
<keyword id="KW-0176">Collagen</keyword>
<keyword id="KW-0217">Developmental protein</keyword>
<keyword id="KW-1015">Disulfide bond</keyword>
<keyword id="KW-0391">Immunity</keyword>
<keyword id="KW-0399">Innate immunity</keyword>
<keyword id="KW-0430">Lectin</keyword>
<keyword id="KW-0465">Mannose-binding</keyword>
<keyword id="KW-0479">Metal-binding</keyword>
<keyword id="KW-1185">Reference proteome</keyword>
<keyword id="KW-0964">Secreted</keyword>
<keyword id="KW-0732">Signal</keyword>
<evidence type="ECO:0000250" key="1">
    <source>
        <dbReference type="UniProtKB" id="Q9BWP8"/>
    </source>
</evidence>
<evidence type="ECO:0000255" key="2"/>
<evidence type="ECO:0000255" key="3">
    <source>
        <dbReference type="PROSITE-ProRule" id="PRU00040"/>
    </source>
</evidence>
<evidence type="ECO:0000256" key="4">
    <source>
        <dbReference type="SAM" id="MobiDB-lite"/>
    </source>
</evidence>
<evidence type="ECO:0000269" key="5">
    <source>
    </source>
</evidence>
<evidence type="ECO:0000305" key="6"/>